<proteinExistence type="evidence at protein level"/>
<dbReference type="EC" id="2.4.2.59" evidence="2 3"/>
<dbReference type="EMBL" id="L77117">
    <property type="protein sequence ID" value="AAB98592.1"/>
    <property type="molecule type" value="Genomic_DNA"/>
</dbReference>
<dbReference type="PIR" id="A64375">
    <property type="entry name" value="A64375"/>
</dbReference>
<dbReference type="PDB" id="4Y4M">
    <property type="method" value="X-ray"/>
    <property type="resolution" value="2.71 A"/>
    <property type="chains" value="A/B/C/D/E/F/G/H=1-267"/>
</dbReference>
<dbReference type="PDBsum" id="4Y4M"/>
<dbReference type="SMR" id="Q58018"/>
<dbReference type="FunCoup" id="Q58018">
    <property type="interactions" value="132"/>
</dbReference>
<dbReference type="STRING" id="243232.MJ_0601"/>
<dbReference type="PaxDb" id="243232-MJ_0601"/>
<dbReference type="EnsemblBacteria" id="AAB98592">
    <property type="protein sequence ID" value="AAB98592"/>
    <property type="gene ID" value="MJ_0601"/>
</dbReference>
<dbReference type="KEGG" id="mja:MJ_0601"/>
<dbReference type="eggNOG" id="arCOG00574">
    <property type="taxonomic scope" value="Archaea"/>
</dbReference>
<dbReference type="HOGENOM" id="CLU_053727_2_0_2"/>
<dbReference type="InParanoid" id="Q58018"/>
<dbReference type="PhylomeDB" id="Q58018"/>
<dbReference type="BioCyc" id="MetaCyc:MONOMER-21800"/>
<dbReference type="BRENDA" id="2.4.2.59">
    <property type="organism ID" value="3260"/>
</dbReference>
<dbReference type="BRENDA" id="2.4.2.60">
    <property type="organism ID" value="3260"/>
</dbReference>
<dbReference type="UniPathway" id="UPA00060"/>
<dbReference type="Proteomes" id="UP000000805">
    <property type="component" value="Chromosome"/>
</dbReference>
<dbReference type="GO" id="GO:0005506">
    <property type="term" value="F:iron ion binding"/>
    <property type="evidence" value="ECO:0000314"/>
    <property type="project" value="UniProtKB"/>
</dbReference>
<dbReference type="GO" id="GO:0016763">
    <property type="term" value="F:pentosyltransferase activity"/>
    <property type="evidence" value="ECO:0007669"/>
    <property type="project" value="UniProtKB-UniRule"/>
</dbReference>
<dbReference type="GO" id="GO:0009228">
    <property type="term" value="P:thiamine biosynthetic process"/>
    <property type="evidence" value="ECO:0007669"/>
    <property type="project" value="UniProtKB-KW"/>
</dbReference>
<dbReference type="GO" id="GO:0009229">
    <property type="term" value="P:thiamine diphosphate biosynthetic process"/>
    <property type="evidence" value="ECO:0007669"/>
    <property type="project" value="UniProtKB-UniRule"/>
</dbReference>
<dbReference type="GO" id="GO:0052837">
    <property type="term" value="P:thiazole biosynthetic process"/>
    <property type="evidence" value="ECO:0000314"/>
    <property type="project" value="UniProtKB"/>
</dbReference>
<dbReference type="Gene3D" id="3.50.50.60">
    <property type="entry name" value="FAD/NAD(P)-binding domain"/>
    <property type="match status" value="1"/>
</dbReference>
<dbReference type="HAMAP" id="MF_00304">
    <property type="entry name" value="Thi4"/>
    <property type="match status" value="1"/>
</dbReference>
<dbReference type="InterPro" id="IPR036188">
    <property type="entry name" value="FAD/NAD-bd_sf"/>
</dbReference>
<dbReference type="InterPro" id="IPR002922">
    <property type="entry name" value="Thi4_fam"/>
</dbReference>
<dbReference type="InterPro" id="IPR022828">
    <property type="entry name" value="Thi4_prok"/>
</dbReference>
<dbReference type="NCBIfam" id="TIGR00292">
    <property type="entry name" value="sulfide-dependent adenosine diphosphate thiazole synthase"/>
    <property type="match status" value="1"/>
</dbReference>
<dbReference type="PANTHER" id="PTHR43422">
    <property type="entry name" value="THIAMINE THIAZOLE SYNTHASE"/>
    <property type="match status" value="1"/>
</dbReference>
<dbReference type="PANTHER" id="PTHR43422:SF3">
    <property type="entry name" value="THIAMINE THIAZOLE SYNTHASE"/>
    <property type="match status" value="1"/>
</dbReference>
<dbReference type="Pfam" id="PF01946">
    <property type="entry name" value="Thi4"/>
    <property type="match status" value="1"/>
</dbReference>
<dbReference type="PRINTS" id="PR00420">
    <property type="entry name" value="RNGMNOXGNASE"/>
</dbReference>
<dbReference type="SUPFAM" id="SSF51905">
    <property type="entry name" value="FAD/NAD(P)-binding domain"/>
    <property type="match status" value="1"/>
</dbReference>
<accession>Q58018</accession>
<organism>
    <name type="scientific">Methanocaldococcus jannaschii (strain ATCC 43067 / DSM 2661 / JAL-1 / JCM 10045 / NBRC 100440)</name>
    <name type="common">Methanococcus jannaschii</name>
    <dbReference type="NCBI Taxonomy" id="243232"/>
    <lineage>
        <taxon>Archaea</taxon>
        <taxon>Methanobacteriati</taxon>
        <taxon>Methanobacteriota</taxon>
        <taxon>Methanomada group</taxon>
        <taxon>Methanococci</taxon>
        <taxon>Methanococcales</taxon>
        <taxon>Methanocaldococcaceae</taxon>
        <taxon>Methanocaldococcus</taxon>
    </lineage>
</organism>
<name>THI4_METJA</name>
<feature type="chain" id="PRO_0000153947" description="Thiamine thiazole synthase">
    <location>
        <begin position="1"/>
        <end position="267"/>
    </location>
</feature>
<feature type="binding site" description="in other chain" evidence="7">
    <location>
        <position position="47"/>
    </location>
    <ligand>
        <name>NAD(+)</name>
        <dbReference type="ChEBI" id="CHEBI:57540"/>
        <note>ligand shared between two adjacent protomers</note>
    </ligand>
</feature>
<feature type="binding site" description="in other chain" evidence="7">
    <location>
        <begin position="66"/>
        <end position="67"/>
    </location>
    <ligand>
        <name>NAD(+)</name>
        <dbReference type="ChEBI" id="CHEBI:57540"/>
        <note>ligand shared between two adjacent protomers</note>
    </ligand>
</feature>
<feature type="binding site" description="in other chain" evidence="7">
    <location>
        <position position="74"/>
    </location>
    <ligand>
        <name>NAD(+)</name>
        <dbReference type="ChEBI" id="CHEBI:57540"/>
        <note>ligand shared between two adjacent protomers</note>
    </ligand>
</feature>
<feature type="binding site" description="in other chain" evidence="7">
    <location>
        <position position="138"/>
    </location>
    <ligand>
        <name>NAD(+)</name>
        <dbReference type="ChEBI" id="CHEBI:57540"/>
        <note>ligand shared between two adjacent protomers</note>
    </ligand>
</feature>
<feature type="binding site" evidence="7">
    <location>
        <begin position="164"/>
        <end position="166"/>
    </location>
    <ligand>
        <name>NAD(+)</name>
        <dbReference type="ChEBI" id="CHEBI:57540"/>
        <note>ligand shared between two adjacent protomers</note>
    </ligand>
</feature>
<feature type="binding site" evidence="1">
    <location>
        <position position="166"/>
    </location>
    <ligand>
        <name>Fe cation</name>
        <dbReference type="ChEBI" id="CHEBI:24875"/>
        <note>ligand shared between two adjacent protomers</note>
    </ligand>
</feature>
<feature type="binding site" description="in other chain" evidence="1">
    <location>
        <position position="181"/>
    </location>
    <ligand>
        <name>Fe cation</name>
        <dbReference type="ChEBI" id="CHEBI:24875"/>
        <note>ligand shared between two adjacent protomers</note>
    </ligand>
</feature>
<feature type="binding site" description="in other chain" evidence="7">
    <location>
        <position position="184"/>
    </location>
    <ligand>
        <name>NAD(+)</name>
        <dbReference type="ChEBI" id="CHEBI:57540"/>
        <note>ligand shared between two adjacent protomers</note>
    </ligand>
</feature>
<feature type="binding site" description="in other chain" evidence="7">
    <location>
        <position position="230"/>
    </location>
    <ligand>
        <name>NAD(+)</name>
        <dbReference type="ChEBI" id="CHEBI:57540"/>
        <note>ligand shared between two adjacent protomers</note>
    </ligand>
</feature>
<feature type="binding site" evidence="1">
    <location>
        <position position="240"/>
    </location>
    <ligand>
        <name>glycine</name>
        <dbReference type="ChEBI" id="CHEBI:57305"/>
    </ligand>
</feature>
<feature type="mutagenesis site" description="Still requires free sulfide for ADT synthesis, showing that this cysteine cannot act as an enzyme-derived sulfur source for thiazole formation as in S.cerevisiae." evidence="2">
    <original>H</original>
    <variation>C</variation>
    <location>
        <position position="164"/>
    </location>
</feature>
<feature type="helix" evidence="9">
    <location>
        <begin position="16"/>
        <end position="34"/>
    </location>
</feature>
<feature type="strand" evidence="9">
    <location>
        <begin position="36"/>
        <end position="42"/>
    </location>
</feature>
<feature type="helix" evidence="9">
    <location>
        <begin position="46"/>
        <end position="57"/>
    </location>
</feature>
<feature type="strand" evidence="9">
    <location>
        <begin position="62"/>
        <end position="70"/>
    </location>
</feature>
<feature type="turn" evidence="9">
    <location>
        <begin position="74"/>
        <end position="78"/>
    </location>
</feature>
<feature type="strand" evidence="9">
    <location>
        <begin position="82"/>
        <end position="88"/>
    </location>
</feature>
<feature type="turn" evidence="9">
    <location>
        <begin position="89"/>
        <end position="92"/>
    </location>
</feature>
<feature type="helix" evidence="9">
    <location>
        <begin position="93"/>
        <end position="96"/>
    </location>
</feature>
<feature type="turn" evidence="9">
    <location>
        <begin position="97"/>
        <end position="99"/>
    </location>
</feature>
<feature type="strand" evidence="9">
    <location>
        <begin position="103"/>
        <end position="106"/>
    </location>
</feature>
<feature type="strand" evidence="9">
    <location>
        <begin position="109"/>
        <end position="113"/>
    </location>
</feature>
<feature type="helix" evidence="9">
    <location>
        <begin position="116"/>
        <end position="127"/>
    </location>
</feature>
<feature type="strand" evidence="9">
    <location>
        <begin position="131"/>
        <end position="144"/>
    </location>
</feature>
<feature type="strand" evidence="9">
    <location>
        <begin position="147"/>
        <end position="155"/>
    </location>
</feature>
<feature type="helix" evidence="9">
    <location>
        <begin position="156"/>
        <end position="161"/>
    </location>
</feature>
<feature type="strand" evidence="9">
    <location>
        <begin position="168"/>
        <end position="177"/>
    </location>
</feature>
<feature type="helix" evidence="9">
    <location>
        <begin position="180"/>
        <end position="182"/>
    </location>
</feature>
<feature type="helix" evidence="9">
    <location>
        <begin position="184"/>
        <end position="192"/>
    </location>
</feature>
<feature type="helix" evidence="9">
    <location>
        <begin position="207"/>
        <end position="217"/>
    </location>
</feature>
<feature type="strand" evidence="9">
    <location>
        <begin position="219"/>
        <end position="222"/>
    </location>
</feature>
<feature type="strand" evidence="9">
    <location>
        <begin position="225"/>
        <end position="227"/>
    </location>
</feature>
<feature type="helix" evidence="9">
    <location>
        <begin position="230"/>
        <end position="235"/>
    </location>
</feature>
<feature type="helix" evidence="9">
    <location>
        <begin position="246"/>
        <end position="263"/>
    </location>
</feature>
<gene>
    <name evidence="4" type="primary">thi4</name>
    <name type="ordered locus">MJ0601</name>
</gene>
<sequence>MVNLMNIKDIKLNADETKTTKAILKASFDMWLDIVEADVVIVGAGPSGLTCARYLAKEGFKVVVLERHLAFGGGTWGGGMGFPYIVVEEPADELLREVGIKLIDMGDGYYVADSVEVPAKLAVAAMDAGAKILTGIVVEDLILREDGVAGVVINSYAIERAGLHIDPLTIRSKVVVDATGHEASIVNILVKKNKLEADVPGEKSMWAEKGENALLRNTREVYPNLFVCGMAANASHGGYRMGAIFGGMYLSGKLCAELITEKLKNKE</sequence>
<keyword id="KW-0002">3D-structure</keyword>
<keyword id="KW-0903">Direct protein sequencing</keyword>
<keyword id="KW-0408">Iron</keyword>
<keyword id="KW-0479">Metal-binding</keyword>
<keyword id="KW-0520">NAD</keyword>
<keyword id="KW-1185">Reference proteome</keyword>
<keyword id="KW-0784">Thiamine biosynthesis</keyword>
<keyword id="KW-0808">Transferase</keyword>
<reference key="1">
    <citation type="journal article" date="1996" name="Science">
        <title>Complete genome sequence of the methanogenic archaeon, Methanococcus jannaschii.</title>
        <authorList>
            <person name="Bult C.J."/>
            <person name="White O."/>
            <person name="Olsen G.J."/>
            <person name="Zhou L."/>
            <person name="Fleischmann R.D."/>
            <person name="Sutton G.G."/>
            <person name="Blake J.A."/>
            <person name="FitzGerald L.M."/>
            <person name="Clayton R.A."/>
            <person name="Gocayne J.D."/>
            <person name="Kerlavage A.R."/>
            <person name="Dougherty B.A."/>
            <person name="Tomb J.-F."/>
            <person name="Adams M.D."/>
            <person name="Reich C.I."/>
            <person name="Overbeek R."/>
            <person name="Kirkness E.F."/>
            <person name="Weinstock K.G."/>
            <person name="Merrick J.M."/>
            <person name="Glodek A."/>
            <person name="Scott J.L."/>
            <person name="Geoghagen N.S.M."/>
            <person name="Weidman J.F."/>
            <person name="Fuhrmann J.L."/>
            <person name="Nguyen D."/>
            <person name="Utterback T.R."/>
            <person name="Kelley J.M."/>
            <person name="Peterson J.D."/>
            <person name="Sadow P.W."/>
            <person name="Hanna M.C."/>
            <person name="Cotton M.D."/>
            <person name="Roberts K.M."/>
            <person name="Hurst M.A."/>
            <person name="Kaine B.P."/>
            <person name="Borodovsky M."/>
            <person name="Klenk H.-P."/>
            <person name="Fraser C.M."/>
            <person name="Smith H.O."/>
            <person name="Woese C.R."/>
            <person name="Venter J.C."/>
        </authorList>
    </citation>
    <scope>NUCLEOTIDE SEQUENCE [LARGE SCALE GENOMIC DNA]</scope>
    <source>
        <strain>ATCC 43067 / DSM 2661 / JAL-1 / JCM 10045 / NBRC 100440</strain>
    </source>
</reference>
<reference key="2">
    <citation type="journal article" date="2004" name="J. Bacteriol.">
        <title>Modified pathway to synthesize ribulose 1,5-bisphosphate in methanogenic archaea.</title>
        <authorList>
            <person name="Finn M.W."/>
            <person name="Tabita F.R."/>
        </authorList>
    </citation>
    <scope>PROTEIN SEQUENCE OF N-TERMINUS</scope>
    <scope>PRELIMINARY FUNCTION IN CO(2) FIXATION WITH RUBISCO</scope>
</reference>
<reference key="3">
    <citation type="journal article" date="2016" name="J. Am. Chem. Soc.">
        <title>From suicide enzyme to catalyst: The iron-dependent sulfide transfer in Methanococcus jannaschii thiamin thiazole biosynthesis.</title>
        <authorList>
            <person name="Eser B.E."/>
            <person name="Zhang X."/>
            <person name="Chanani P.K."/>
            <person name="Begley T.P."/>
            <person name="Ealick S.E."/>
        </authorList>
    </citation>
    <scope>FUNCTION</scope>
    <scope>CATALYTIC ACTIVITY</scope>
    <scope>COFACTOR</scope>
    <scope>PATHWAY</scope>
    <scope>REACTION MECHANISM</scope>
</reference>
<reference key="4">
    <citation type="journal article" date="2016" name="Biochemistry">
        <title>Structural basis for iron-mediated sulfur transfer in archael and yeast thiazole synthases.</title>
        <authorList>
            <person name="Zhang X."/>
            <person name="Eser B.E."/>
            <person name="Chanani P.K."/>
            <person name="Begley T.P."/>
            <person name="Ealick S.E."/>
        </authorList>
    </citation>
    <scope>X-RAY CRYSTALLOGRAPHY (2.71 ANGSTROMS) IN COMPLEX WITH ADP-RIBULOSE</scope>
    <scope>FUNCTION</scope>
    <scope>CATALYTIC ACTIVITY</scope>
    <scope>COFACTOR</scope>
    <scope>SUBUNIT</scope>
    <scope>REACTION MECHANISM</scope>
    <scope>MUTAGENESIS OF HIS-164</scope>
    <scope>LACK OF RUBP SYNTHASE ACTIVITY</scope>
</reference>
<evidence type="ECO:0000255" key="1">
    <source>
        <dbReference type="HAMAP-Rule" id="MF_00304"/>
    </source>
</evidence>
<evidence type="ECO:0000269" key="2">
    <source>
    </source>
</evidence>
<evidence type="ECO:0000269" key="3">
    <source>
    </source>
</evidence>
<evidence type="ECO:0000303" key="4">
    <source>
    </source>
</evidence>
<evidence type="ECO:0000305" key="5"/>
<evidence type="ECO:0000305" key="6">
    <source>
    </source>
</evidence>
<evidence type="ECO:0000305" key="7">
    <source>
    </source>
</evidence>
<evidence type="ECO:0000305" key="8">
    <source>
    </source>
</evidence>
<evidence type="ECO:0007829" key="9">
    <source>
        <dbReference type="PDB" id="4Y4M"/>
    </source>
</evidence>
<comment type="function">
    <text evidence="2 3">Involved in the biosynthesis of the thiazole moiety of thiamine. Catalyzes the conversion of NAD and glycine to adenosine diphosphate 5-(2-hydroxyethyl)-4-methylthiazole-2-carboxylate (ADT), an adenylated thiazole intermediate, using free sulfide as a source of sulfur.</text>
</comment>
<comment type="catalytic activity">
    <reaction evidence="2 3">
        <text>hydrogen sulfide + glycine + NAD(+) = ADP-5-ethyl-4-methylthiazole-2-carboxylate + nicotinamide + 3 H2O + H(+)</text>
        <dbReference type="Rhea" id="RHEA:55704"/>
        <dbReference type="ChEBI" id="CHEBI:15377"/>
        <dbReference type="ChEBI" id="CHEBI:15378"/>
        <dbReference type="ChEBI" id="CHEBI:17154"/>
        <dbReference type="ChEBI" id="CHEBI:29919"/>
        <dbReference type="ChEBI" id="CHEBI:57305"/>
        <dbReference type="ChEBI" id="CHEBI:57540"/>
        <dbReference type="ChEBI" id="CHEBI:139151"/>
        <dbReference type="EC" id="2.4.2.59"/>
    </reaction>
</comment>
<comment type="cofactor">
    <cofactor evidence="2 3">
        <name>Fe(2+)</name>
        <dbReference type="ChEBI" id="CHEBI:29033"/>
    </cofactor>
    <text evidence="3">Binds 1 Fe(2+) ion per subunit. Other divalent metal cations can support activity.</text>
</comment>
<comment type="pathway">
    <text evidence="8">Cofactor biosynthesis; thiamine diphosphate biosynthesis.</text>
</comment>
<comment type="subunit">
    <text evidence="2">Homooctamer; tetramer of dimers.</text>
</comment>
<comment type="miscellaneous">
    <text evidence="8">Unlike THI4 from S.cerevisiae, Thi4 from M.jannaschii can catalyze multiple turnovers because the sulfide is not enzyme derived.</text>
</comment>
<comment type="similarity">
    <text evidence="5">Belongs to the THI4 family.</text>
</comment>
<comment type="caution">
    <text evidence="6 7">This protein was originally thought to have NAD-dependent ribose 1,5-bisphosphate isomerase activity but the recombinant protein was not active in vitro (PubMed:15375115, PubMed:26919468). In contrast, another protein from M.jannaschii likely possesses this activity (MJ0122).</text>
</comment>
<protein>
    <recommendedName>
        <fullName evidence="4">Thiamine thiazole synthase</fullName>
        <ecNumber evidence="2 3">2.4.2.59</ecNumber>
    </recommendedName>
</protein>